<evidence type="ECO:0000250" key="1"/>
<evidence type="ECO:0000255" key="2">
    <source>
        <dbReference type="PROSITE-ProRule" id="PRU00140"/>
    </source>
</evidence>
<evidence type="ECO:0000255" key="3">
    <source>
        <dbReference type="PROSITE-ProRule" id="PRU00227"/>
    </source>
</evidence>
<evidence type="ECO:0000256" key="4">
    <source>
        <dbReference type="SAM" id="MobiDB-lite"/>
    </source>
</evidence>
<evidence type="ECO:0000305" key="5"/>
<name>ERT1_POSPM</name>
<accession>B8PBQ6</accession>
<reference key="1">
    <citation type="journal article" date="2009" name="Proc. Natl. Acad. Sci. U.S.A.">
        <title>Genome, transcriptome, and secretome analysis of wood decay fungus Postia placenta supports unique mechanisms of lignocellulose conversion.</title>
        <authorList>
            <person name="Martinez D."/>
            <person name="Challacombe J."/>
            <person name="Morgenstern I."/>
            <person name="Hibbett D."/>
            <person name="Schmoll M."/>
            <person name="Kubicek C.P."/>
            <person name="Ferreira P."/>
            <person name="Ruiz-Duenas F.J."/>
            <person name="Martinez A.T."/>
            <person name="Kersten P."/>
            <person name="Hammel K.E."/>
            <person name="Vanden Wymelenberg A."/>
            <person name="Gaskell J."/>
            <person name="Lindquist E."/>
            <person name="Sabat G."/>
            <person name="Splinter BonDurant S."/>
            <person name="Larrondo L.F."/>
            <person name="Canessa P."/>
            <person name="Vicuna R."/>
            <person name="Yadav J."/>
            <person name="Doddapaneni H."/>
            <person name="Subramanian V."/>
            <person name="Pisabarro A.G."/>
            <person name="Lavin J.L."/>
            <person name="Oguiza J.A."/>
            <person name="Master E."/>
            <person name="Henrissat B."/>
            <person name="Coutinho P.M."/>
            <person name="Harris P."/>
            <person name="Magnuson J.K."/>
            <person name="Baker S.E."/>
            <person name="Bruno K."/>
            <person name="Kenealy W."/>
            <person name="Hoegger P.J."/>
            <person name="Kuees U."/>
            <person name="Ramaiya P."/>
            <person name="Lucas S."/>
            <person name="Salamov A."/>
            <person name="Shapiro H."/>
            <person name="Tu H."/>
            <person name="Chee C.L."/>
            <person name="Misra M."/>
            <person name="Xie G."/>
            <person name="Teter S."/>
            <person name="Yaver D."/>
            <person name="James T."/>
            <person name="Mokrejs M."/>
            <person name="Pospisek M."/>
            <person name="Grigoriev I.V."/>
            <person name="Brettin T."/>
            <person name="Rokhsar D."/>
            <person name="Berka R."/>
            <person name="Cullen D."/>
        </authorList>
    </citation>
    <scope>NUCLEOTIDE SEQUENCE [LARGE SCALE GENOMIC DNA]</scope>
    <source>
        <strain>ATCC 44394 / Madison 698-R</strain>
    </source>
</reference>
<sequence>MSSALTQQPAYRLAPSASSSTSDINAAPDADSKKKTGTKRRRPQDGTSDSADSSSQPPRTREGPKKKKANRACFHCQKAHLTCDDSRPCQRCVKRGMADNCTEGHRKKAKYLLDEEELAQPDPPYVPPDPMFPSSYTASAPFSLGSEGANLEYSILSAILGNSPDPTGPPNSGSPSVSHAPQPSAPFNGQPDIGAGSAISGGAQGAAAVYQAVTKPYDYTEGYHFLMKHLPTRFDKNDILRIVRALAIFRPSLIALQMPLSEEDEVFVEKCFQRSLIELDKLVSFSGTPTVAWRRTGEICLVGPEFCMLTGWEKEELVGRRKYIYELFENQSVVEYWENFANHAFENTTQSVYSHCVLLKPSGTPVPCTFCFSIRRDIMDLPSLVIGQWLPLL</sequence>
<proteinExistence type="inferred from homology"/>
<protein>
    <recommendedName>
        <fullName>Transcription activator of gluconeogenesis ERT1</fullName>
    </recommendedName>
</protein>
<organism>
    <name type="scientific">Postia placenta (strain ATCC 44394 / Madison 698-R)</name>
    <name type="common">Brown rot fungus</name>
    <name type="synonym">Poria monticola</name>
    <dbReference type="NCBI Taxonomy" id="561896"/>
    <lineage>
        <taxon>Eukaryota</taxon>
        <taxon>Fungi</taxon>
        <taxon>Dikarya</taxon>
        <taxon>Basidiomycota</taxon>
        <taxon>Agaricomycotina</taxon>
        <taxon>Agaricomycetes</taxon>
        <taxon>Polyporales</taxon>
        <taxon>Adustoporiaceae</taxon>
        <taxon>Rhodonia</taxon>
    </lineage>
</organism>
<dbReference type="EMBL" id="EQ966304">
    <property type="protein sequence ID" value="EED81673.1"/>
    <property type="molecule type" value="Genomic_DNA"/>
</dbReference>
<dbReference type="RefSeq" id="XP_002473103.1">
    <property type="nucleotide sequence ID" value="XM_002473058.1"/>
</dbReference>
<dbReference type="SMR" id="B8PBQ6"/>
<dbReference type="KEGG" id="ppl:POSPLDRAFT_113058"/>
<dbReference type="HOGENOM" id="CLU_010748_2_1_1"/>
<dbReference type="InParanoid" id="B8PBQ6"/>
<dbReference type="OMA" id="EDLIYME"/>
<dbReference type="OrthoDB" id="2538135at2759"/>
<dbReference type="GO" id="GO:0005634">
    <property type="term" value="C:nucleus"/>
    <property type="evidence" value="ECO:0007669"/>
    <property type="project" value="UniProtKB-SubCell"/>
</dbReference>
<dbReference type="GO" id="GO:0000981">
    <property type="term" value="F:DNA-binding transcription factor activity, RNA polymerase II-specific"/>
    <property type="evidence" value="ECO:0007669"/>
    <property type="project" value="InterPro"/>
</dbReference>
<dbReference type="GO" id="GO:0000977">
    <property type="term" value="F:RNA polymerase II transcription regulatory region sequence-specific DNA binding"/>
    <property type="evidence" value="ECO:0007669"/>
    <property type="project" value="TreeGrafter"/>
</dbReference>
<dbReference type="GO" id="GO:0008270">
    <property type="term" value="F:zinc ion binding"/>
    <property type="evidence" value="ECO:0007669"/>
    <property type="project" value="InterPro"/>
</dbReference>
<dbReference type="GO" id="GO:0009267">
    <property type="term" value="P:cellular response to starvation"/>
    <property type="evidence" value="ECO:0007669"/>
    <property type="project" value="TreeGrafter"/>
</dbReference>
<dbReference type="GO" id="GO:0006094">
    <property type="term" value="P:gluconeogenesis"/>
    <property type="evidence" value="ECO:0007669"/>
    <property type="project" value="UniProtKB-KW"/>
</dbReference>
<dbReference type="CDD" id="cd00067">
    <property type="entry name" value="GAL4"/>
    <property type="match status" value="1"/>
</dbReference>
<dbReference type="CDD" id="cd00130">
    <property type="entry name" value="PAS"/>
    <property type="match status" value="1"/>
</dbReference>
<dbReference type="Gene3D" id="3.30.450.20">
    <property type="entry name" value="PAS domain"/>
    <property type="match status" value="1"/>
</dbReference>
<dbReference type="Gene3D" id="4.10.240.10">
    <property type="entry name" value="Zn(2)-C6 fungal-type DNA-binding domain"/>
    <property type="match status" value="1"/>
</dbReference>
<dbReference type="InterPro" id="IPR050335">
    <property type="entry name" value="ERT1_acuK_gluconeogen_tf"/>
</dbReference>
<dbReference type="InterPro" id="IPR000014">
    <property type="entry name" value="PAS"/>
</dbReference>
<dbReference type="InterPro" id="IPR035965">
    <property type="entry name" value="PAS-like_dom_sf"/>
</dbReference>
<dbReference type="InterPro" id="IPR056751">
    <property type="entry name" value="PAS_13"/>
</dbReference>
<dbReference type="InterPro" id="IPR036864">
    <property type="entry name" value="Zn2-C6_fun-type_DNA-bd_sf"/>
</dbReference>
<dbReference type="InterPro" id="IPR001138">
    <property type="entry name" value="Zn2Cys6_DnaBD"/>
</dbReference>
<dbReference type="PANTHER" id="PTHR47659:SF1">
    <property type="entry name" value="TRANSCRIPTION ACTIVATOR OF GLUCONEOGENESIS ERT1"/>
    <property type="match status" value="1"/>
</dbReference>
<dbReference type="PANTHER" id="PTHR47659">
    <property type="entry name" value="ZN(II)2CYS6 TRANSCRIPTION FACTOR (EUROFUNG)-RELATED"/>
    <property type="match status" value="1"/>
</dbReference>
<dbReference type="Pfam" id="PF24990">
    <property type="entry name" value="PAS_13"/>
    <property type="match status" value="1"/>
</dbReference>
<dbReference type="Pfam" id="PF00172">
    <property type="entry name" value="Zn_clus"/>
    <property type="match status" value="1"/>
</dbReference>
<dbReference type="SMART" id="SM00066">
    <property type="entry name" value="GAL4"/>
    <property type="match status" value="1"/>
</dbReference>
<dbReference type="SUPFAM" id="SSF55785">
    <property type="entry name" value="PYP-like sensor domain (PAS domain)"/>
    <property type="match status" value="1"/>
</dbReference>
<dbReference type="SUPFAM" id="SSF57701">
    <property type="entry name" value="Zn2/Cys6 DNA-binding domain"/>
    <property type="match status" value="1"/>
</dbReference>
<dbReference type="PROSITE" id="PS50112">
    <property type="entry name" value="PAS"/>
    <property type="match status" value="1"/>
</dbReference>
<dbReference type="PROSITE" id="PS50048">
    <property type="entry name" value="ZN2_CY6_FUNGAL_2"/>
    <property type="match status" value="1"/>
</dbReference>
<keyword id="KW-0010">Activator</keyword>
<keyword id="KW-0238">DNA-binding</keyword>
<keyword id="KW-0312">Gluconeogenesis</keyword>
<keyword id="KW-0479">Metal-binding</keyword>
<keyword id="KW-0539">Nucleus</keyword>
<keyword id="KW-0804">Transcription</keyword>
<keyword id="KW-0805">Transcription regulation</keyword>
<keyword id="KW-0862">Zinc</keyword>
<comment type="function">
    <text evidence="1">Transcription factor which regulates nonfermentable carbon utilization. Activator of gluconeogenetic genes (By similarity).</text>
</comment>
<comment type="subcellular location">
    <subcellularLocation>
        <location evidence="3">Nucleus</location>
    </subcellularLocation>
</comment>
<comment type="similarity">
    <text evidence="5">Belongs to the ERT1/acuK family.</text>
</comment>
<feature type="chain" id="PRO_0000406468" description="Transcription activator of gluconeogenesis ERT1">
    <location>
        <begin position="1"/>
        <end position="393"/>
    </location>
</feature>
<feature type="domain" description="PAS" evidence="2">
    <location>
        <begin position="275"/>
        <end position="348"/>
    </location>
</feature>
<feature type="DNA-binding region" description="Zn(2)-C6 fungal-type" evidence="3">
    <location>
        <begin position="73"/>
        <end position="101"/>
    </location>
</feature>
<feature type="region of interest" description="Disordered" evidence="4">
    <location>
        <begin position="1"/>
        <end position="71"/>
    </location>
</feature>
<feature type="region of interest" description="Disordered" evidence="4">
    <location>
        <begin position="161"/>
        <end position="198"/>
    </location>
</feature>
<feature type="compositionally biased region" description="Polar residues" evidence="4">
    <location>
        <begin position="45"/>
        <end position="58"/>
    </location>
</feature>
<feature type="compositionally biased region" description="Polar residues" evidence="4">
    <location>
        <begin position="170"/>
        <end position="187"/>
    </location>
</feature>
<gene>
    <name type="primary">ERT1</name>
    <name type="ORF">POSPLDRAFT_113058</name>
</gene>